<feature type="chain" id="PRO_0000130411" description="Large ribosomal subunit protein uL29">
    <location>
        <begin position="1"/>
        <end position="94"/>
    </location>
</feature>
<feature type="region of interest" description="Disordered" evidence="1">
    <location>
        <begin position="65"/>
        <end position="94"/>
    </location>
</feature>
<feature type="compositionally biased region" description="Basic residues" evidence="1">
    <location>
        <begin position="73"/>
        <end position="94"/>
    </location>
</feature>
<keyword id="KW-1185">Reference proteome</keyword>
<keyword id="KW-0687">Ribonucleoprotein</keyword>
<keyword id="KW-0689">Ribosomal protein</keyword>
<reference key="1">
    <citation type="journal article" date="2000" name="FEMS Microbiol. Lett.">
        <title>Characterization of the Leptospira interrogans S10-spc-alpha operon.</title>
        <authorList>
            <person name="Zuerner R.L."/>
            <person name="Hartskeerl R.A."/>
            <person name="van de Kemp H."/>
            <person name="Bal A.E."/>
        </authorList>
    </citation>
    <scope>NUCLEOTIDE SEQUENCE [GENOMIC DNA]</scope>
    <source>
        <strain>Lai / Serogroup Icterohaemorrhagiae / Serovar lai</strain>
    </source>
</reference>
<reference key="2">
    <citation type="journal article" date="2003" name="Nature">
        <title>Unique physiological and pathogenic features of Leptospira interrogans revealed by whole-genome sequencing.</title>
        <authorList>
            <person name="Ren S.-X."/>
            <person name="Fu G."/>
            <person name="Jiang X.-G."/>
            <person name="Zeng R."/>
            <person name="Miao Y.-G."/>
            <person name="Xu H."/>
            <person name="Zhang Y.-X."/>
            <person name="Xiong H."/>
            <person name="Lu G."/>
            <person name="Lu L.-F."/>
            <person name="Jiang H.-Q."/>
            <person name="Jia J."/>
            <person name="Tu Y.-F."/>
            <person name="Jiang J.-X."/>
            <person name="Gu W.-Y."/>
            <person name="Zhang Y.-Q."/>
            <person name="Cai Z."/>
            <person name="Sheng H.-H."/>
            <person name="Yin H.-F."/>
            <person name="Zhang Y."/>
            <person name="Zhu G.-F."/>
            <person name="Wan M."/>
            <person name="Huang H.-L."/>
            <person name="Qian Z."/>
            <person name="Wang S.-Y."/>
            <person name="Ma W."/>
            <person name="Yao Z.-J."/>
            <person name="Shen Y."/>
            <person name="Qiang B.-Q."/>
            <person name="Xia Q.-C."/>
            <person name="Guo X.-K."/>
            <person name="Danchin A."/>
            <person name="Saint Girons I."/>
            <person name="Somerville R.L."/>
            <person name="Wen Y.-M."/>
            <person name="Shi M.-H."/>
            <person name="Chen Z."/>
            <person name="Xu J.-G."/>
            <person name="Zhao G.-P."/>
        </authorList>
    </citation>
    <scope>NUCLEOTIDE SEQUENCE [LARGE SCALE GENOMIC DNA]</scope>
    <source>
        <strain>56601</strain>
    </source>
</reference>
<proteinExistence type="inferred from homology"/>
<name>RL29_LEPIN</name>
<dbReference type="EMBL" id="AF115283">
    <property type="protein sequence ID" value="AAD40591.1"/>
    <property type="molecule type" value="Genomic_DNA"/>
</dbReference>
<dbReference type="EMBL" id="AE010300">
    <property type="protein sequence ID" value="AAN47946.1"/>
    <property type="molecule type" value="Genomic_DNA"/>
</dbReference>
<dbReference type="RefSeq" id="NP_710928.1">
    <property type="nucleotide sequence ID" value="NC_004342.2"/>
</dbReference>
<dbReference type="RefSeq" id="WP_000721426.1">
    <property type="nucleotide sequence ID" value="NC_004342.2"/>
</dbReference>
<dbReference type="SMR" id="Q9XD28"/>
<dbReference type="STRING" id="189518.LA_0747"/>
<dbReference type="PaxDb" id="189518-LA_0747"/>
<dbReference type="EnsemblBacteria" id="AAN47946">
    <property type="protein sequence ID" value="AAN47946"/>
    <property type="gene ID" value="LA_0747"/>
</dbReference>
<dbReference type="GeneID" id="61142739"/>
<dbReference type="KEGG" id="lil:LA_0747"/>
<dbReference type="PATRIC" id="fig|189518.3.peg.753"/>
<dbReference type="HOGENOM" id="CLU_2382618_0_0_12"/>
<dbReference type="InParanoid" id="Q9XD28"/>
<dbReference type="OrthoDB" id="331322at2"/>
<dbReference type="Proteomes" id="UP000001408">
    <property type="component" value="Chromosome I"/>
</dbReference>
<dbReference type="GO" id="GO:0022625">
    <property type="term" value="C:cytosolic large ribosomal subunit"/>
    <property type="evidence" value="ECO:0000318"/>
    <property type="project" value="GO_Central"/>
</dbReference>
<dbReference type="GO" id="GO:0003735">
    <property type="term" value="F:structural constituent of ribosome"/>
    <property type="evidence" value="ECO:0007669"/>
    <property type="project" value="InterPro"/>
</dbReference>
<dbReference type="GO" id="GO:0006412">
    <property type="term" value="P:translation"/>
    <property type="evidence" value="ECO:0007669"/>
    <property type="project" value="UniProtKB-UniRule"/>
</dbReference>
<dbReference type="Gene3D" id="1.10.287.310">
    <property type="match status" value="1"/>
</dbReference>
<dbReference type="HAMAP" id="MF_00374">
    <property type="entry name" value="Ribosomal_uL29"/>
    <property type="match status" value="1"/>
</dbReference>
<dbReference type="InterPro" id="IPR050063">
    <property type="entry name" value="Ribosomal_protein_uL29"/>
</dbReference>
<dbReference type="InterPro" id="IPR001854">
    <property type="entry name" value="Ribosomal_uL29"/>
</dbReference>
<dbReference type="InterPro" id="IPR036049">
    <property type="entry name" value="Ribosomal_uL29_sf"/>
</dbReference>
<dbReference type="NCBIfam" id="TIGR00012">
    <property type="entry name" value="L29"/>
    <property type="match status" value="1"/>
</dbReference>
<dbReference type="PANTHER" id="PTHR10916">
    <property type="entry name" value="60S RIBOSOMAL PROTEIN L35/50S RIBOSOMAL PROTEIN L29"/>
    <property type="match status" value="1"/>
</dbReference>
<dbReference type="PANTHER" id="PTHR10916:SF0">
    <property type="entry name" value="LARGE RIBOSOMAL SUBUNIT PROTEIN UL29C"/>
    <property type="match status" value="1"/>
</dbReference>
<dbReference type="Pfam" id="PF00831">
    <property type="entry name" value="Ribosomal_L29"/>
    <property type="match status" value="1"/>
</dbReference>
<dbReference type="SUPFAM" id="SSF46561">
    <property type="entry name" value="Ribosomal protein L29 (L29p)"/>
    <property type="match status" value="1"/>
</dbReference>
<evidence type="ECO:0000256" key="1">
    <source>
        <dbReference type="SAM" id="MobiDB-lite"/>
    </source>
</evidence>
<evidence type="ECO:0000305" key="2"/>
<comment type="similarity">
    <text evidence="2">Belongs to the universal ribosomal protein uL29 family.</text>
</comment>
<accession>Q9XD28</accession>
<organism>
    <name type="scientific">Leptospira interrogans serogroup Icterohaemorrhagiae serovar Lai (strain 56601)</name>
    <dbReference type="NCBI Taxonomy" id="189518"/>
    <lineage>
        <taxon>Bacteria</taxon>
        <taxon>Pseudomonadati</taxon>
        <taxon>Spirochaetota</taxon>
        <taxon>Spirochaetia</taxon>
        <taxon>Leptospirales</taxon>
        <taxon>Leptospiraceae</taxon>
        <taxon>Leptospira</taxon>
    </lineage>
</organism>
<protein>
    <recommendedName>
        <fullName evidence="2">Large ribosomal subunit protein uL29</fullName>
    </recommendedName>
    <alternativeName>
        <fullName>50S ribosomal protein L29</fullName>
    </alternativeName>
</protein>
<gene>
    <name type="primary">rpmC</name>
    <name type="ordered locus">LA_0747</name>
</gene>
<sequence length="94" mass="10958">MKKIKLQELKDSEILEQLEEARKVLRNSRFQYGVARSLENPKIISNTKKKIAKLLTIQRERQLKANPGERKSRVFSRAKRKKKNLARLSAKAKG</sequence>